<dbReference type="EC" id="2.5.1.3" evidence="1"/>
<dbReference type="EMBL" id="BX640411">
    <property type="protein sequence ID" value="CAE40693.1"/>
    <property type="molecule type" value="Genomic_DNA"/>
</dbReference>
<dbReference type="RefSeq" id="NP_879191.1">
    <property type="nucleotide sequence ID" value="NC_002929.2"/>
</dbReference>
<dbReference type="RefSeq" id="WP_003814984.1">
    <property type="nucleotide sequence ID" value="NZ_CP039022.1"/>
</dbReference>
<dbReference type="SMR" id="Q7W049"/>
<dbReference type="STRING" id="257313.BP0316"/>
<dbReference type="PaxDb" id="257313-BP0316"/>
<dbReference type="GeneID" id="93205734"/>
<dbReference type="KEGG" id="bpe:BP0316"/>
<dbReference type="PATRIC" id="fig|257313.5.peg.342"/>
<dbReference type="eggNOG" id="COG0352">
    <property type="taxonomic scope" value="Bacteria"/>
</dbReference>
<dbReference type="HOGENOM" id="CLU_018272_3_1_4"/>
<dbReference type="UniPathway" id="UPA00060">
    <property type="reaction ID" value="UER00141"/>
</dbReference>
<dbReference type="Proteomes" id="UP000002676">
    <property type="component" value="Chromosome"/>
</dbReference>
<dbReference type="GO" id="GO:0005737">
    <property type="term" value="C:cytoplasm"/>
    <property type="evidence" value="ECO:0007669"/>
    <property type="project" value="TreeGrafter"/>
</dbReference>
<dbReference type="GO" id="GO:0000287">
    <property type="term" value="F:magnesium ion binding"/>
    <property type="evidence" value="ECO:0007669"/>
    <property type="project" value="UniProtKB-UniRule"/>
</dbReference>
<dbReference type="GO" id="GO:0004789">
    <property type="term" value="F:thiamine-phosphate diphosphorylase activity"/>
    <property type="evidence" value="ECO:0007669"/>
    <property type="project" value="UniProtKB-UniRule"/>
</dbReference>
<dbReference type="GO" id="GO:0009228">
    <property type="term" value="P:thiamine biosynthetic process"/>
    <property type="evidence" value="ECO:0007669"/>
    <property type="project" value="UniProtKB-KW"/>
</dbReference>
<dbReference type="GO" id="GO:0009229">
    <property type="term" value="P:thiamine diphosphate biosynthetic process"/>
    <property type="evidence" value="ECO:0007669"/>
    <property type="project" value="UniProtKB-UniRule"/>
</dbReference>
<dbReference type="CDD" id="cd00564">
    <property type="entry name" value="TMP_TenI"/>
    <property type="match status" value="1"/>
</dbReference>
<dbReference type="Gene3D" id="3.20.20.70">
    <property type="entry name" value="Aldolase class I"/>
    <property type="match status" value="1"/>
</dbReference>
<dbReference type="HAMAP" id="MF_00097">
    <property type="entry name" value="TMP_synthase"/>
    <property type="match status" value="1"/>
</dbReference>
<dbReference type="InterPro" id="IPR013785">
    <property type="entry name" value="Aldolase_TIM"/>
</dbReference>
<dbReference type="InterPro" id="IPR036206">
    <property type="entry name" value="ThiamineP_synth_sf"/>
</dbReference>
<dbReference type="InterPro" id="IPR022998">
    <property type="entry name" value="ThiamineP_synth_TenI"/>
</dbReference>
<dbReference type="InterPro" id="IPR034291">
    <property type="entry name" value="TMP_synthase"/>
</dbReference>
<dbReference type="NCBIfam" id="TIGR00693">
    <property type="entry name" value="thiE"/>
    <property type="match status" value="1"/>
</dbReference>
<dbReference type="PANTHER" id="PTHR20857">
    <property type="entry name" value="THIAMINE-PHOSPHATE PYROPHOSPHORYLASE"/>
    <property type="match status" value="1"/>
</dbReference>
<dbReference type="PANTHER" id="PTHR20857:SF15">
    <property type="entry name" value="THIAMINE-PHOSPHATE SYNTHASE"/>
    <property type="match status" value="1"/>
</dbReference>
<dbReference type="Pfam" id="PF02581">
    <property type="entry name" value="TMP-TENI"/>
    <property type="match status" value="1"/>
</dbReference>
<dbReference type="SUPFAM" id="SSF51391">
    <property type="entry name" value="Thiamin phosphate synthase"/>
    <property type="match status" value="1"/>
</dbReference>
<protein>
    <recommendedName>
        <fullName evidence="1">Thiamine-phosphate synthase</fullName>
        <shortName evidence="1">TP synthase</shortName>
        <shortName evidence="1">TPS</shortName>
        <ecNumber evidence="1">2.5.1.3</ecNumber>
    </recommendedName>
    <alternativeName>
        <fullName evidence="1">Thiamine-phosphate pyrophosphorylase</fullName>
        <shortName evidence="1">TMP pyrophosphorylase</shortName>
        <shortName evidence="1">TMP-PPase</shortName>
    </alternativeName>
</protein>
<feature type="chain" id="PRO_0000156999" description="Thiamine-phosphate synthase">
    <location>
        <begin position="1"/>
        <end position="217"/>
    </location>
</feature>
<feature type="binding site" evidence="1">
    <location>
        <begin position="39"/>
        <end position="43"/>
    </location>
    <ligand>
        <name>4-amino-2-methyl-5-(diphosphooxymethyl)pyrimidine</name>
        <dbReference type="ChEBI" id="CHEBI:57841"/>
    </ligand>
</feature>
<feature type="binding site" evidence="1">
    <location>
        <position position="71"/>
    </location>
    <ligand>
        <name>4-amino-2-methyl-5-(diphosphooxymethyl)pyrimidine</name>
        <dbReference type="ChEBI" id="CHEBI:57841"/>
    </ligand>
</feature>
<feature type="binding site" evidence="1">
    <location>
        <position position="72"/>
    </location>
    <ligand>
        <name>Mg(2+)</name>
        <dbReference type="ChEBI" id="CHEBI:18420"/>
    </ligand>
</feature>
<feature type="binding site" evidence="1">
    <location>
        <position position="91"/>
    </location>
    <ligand>
        <name>Mg(2+)</name>
        <dbReference type="ChEBI" id="CHEBI:18420"/>
    </ligand>
</feature>
<feature type="binding site" evidence="1">
    <location>
        <position position="110"/>
    </location>
    <ligand>
        <name>4-amino-2-methyl-5-(diphosphooxymethyl)pyrimidine</name>
        <dbReference type="ChEBI" id="CHEBI:57841"/>
    </ligand>
</feature>
<feature type="binding site" evidence="1">
    <location>
        <begin position="137"/>
        <end position="139"/>
    </location>
    <ligand>
        <name>2-[(2R,5Z)-2-carboxy-4-methylthiazol-5(2H)-ylidene]ethyl phosphate</name>
        <dbReference type="ChEBI" id="CHEBI:62899"/>
    </ligand>
</feature>
<feature type="binding site" evidence="1">
    <location>
        <position position="140"/>
    </location>
    <ligand>
        <name>4-amino-2-methyl-5-(diphosphooxymethyl)pyrimidine</name>
        <dbReference type="ChEBI" id="CHEBI:57841"/>
    </ligand>
</feature>
<feature type="binding site" evidence="1">
    <location>
        <position position="173"/>
    </location>
    <ligand>
        <name>2-[(2R,5Z)-2-carboxy-4-methylthiazol-5(2H)-ylidene]ethyl phosphate</name>
        <dbReference type="ChEBI" id="CHEBI:62899"/>
    </ligand>
</feature>
<feature type="binding site" evidence="1">
    <location>
        <begin position="193"/>
        <end position="194"/>
    </location>
    <ligand>
        <name>2-[(2R,5Z)-2-carboxy-4-methylthiazol-5(2H)-ylidene]ethyl phosphate</name>
        <dbReference type="ChEBI" id="CHEBI:62899"/>
    </ligand>
</feature>
<name>THIE_BORPE</name>
<proteinExistence type="inferred from homology"/>
<keyword id="KW-0460">Magnesium</keyword>
<keyword id="KW-0479">Metal-binding</keyword>
<keyword id="KW-1185">Reference proteome</keyword>
<keyword id="KW-0784">Thiamine biosynthesis</keyword>
<keyword id="KW-0808">Transferase</keyword>
<gene>
    <name evidence="1" type="primary">thiE</name>
    <name type="ordered locus">BP0316</name>
</gene>
<sequence>MKTLRFPAGLYGITPEWDDTDRLLAAVRAAAAGGMTALQLRRKLADERLRAAQARALAPLCRELGVVFLVNDHWKLALDVGADGAHLGRDDADPATVRAQAGAGLLLGVSCYNDLRRADALLAAGADYVAFGTVFASPTKPEAVHAPLQTLTEARARVLACPAPRPAVVAIGGITPANVSQVAQAGADSAAVISGLFEAPDIQAAARACAAAFSVNP</sequence>
<evidence type="ECO:0000255" key="1">
    <source>
        <dbReference type="HAMAP-Rule" id="MF_00097"/>
    </source>
</evidence>
<organism>
    <name type="scientific">Bordetella pertussis (strain Tohama I / ATCC BAA-589 / NCTC 13251)</name>
    <dbReference type="NCBI Taxonomy" id="257313"/>
    <lineage>
        <taxon>Bacteria</taxon>
        <taxon>Pseudomonadati</taxon>
        <taxon>Pseudomonadota</taxon>
        <taxon>Betaproteobacteria</taxon>
        <taxon>Burkholderiales</taxon>
        <taxon>Alcaligenaceae</taxon>
        <taxon>Bordetella</taxon>
    </lineage>
</organism>
<reference key="1">
    <citation type="journal article" date="2003" name="Nat. Genet.">
        <title>Comparative analysis of the genome sequences of Bordetella pertussis, Bordetella parapertussis and Bordetella bronchiseptica.</title>
        <authorList>
            <person name="Parkhill J."/>
            <person name="Sebaihia M."/>
            <person name="Preston A."/>
            <person name="Murphy L.D."/>
            <person name="Thomson N.R."/>
            <person name="Harris D.E."/>
            <person name="Holden M.T.G."/>
            <person name="Churcher C.M."/>
            <person name="Bentley S.D."/>
            <person name="Mungall K.L."/>
            <person name="Cerdeno-Tarraga A.-M."/>
            <person name="Temple L."/>
            <person name="James K.D."/>
            <person name="Harris B."/>
            <person name="Quail M.A."/>
            <person name="Achtman M."/>
            <person name="Atkin R."/>
            <person name="Baker S."/>
            <person name="Basham D."/>
            <person name="Bason N."/>
            <person name="Cherevach I."/>
            <person name="Chillingworth T."/>
            <person name="Collins M."/>
            <person name="Cronin A."/>
            <person name="Davis P."/>
            <person name="Doggett J."/>
            <person name="Feltwell T."/>
            <person name="Goble A."/>
            <person name="Hamlin N."/>
            <person name="Hauser H."/>
            <person name="Holroyd S."/>
            <person name="Jagels K."/>
            <person name="Leather S."/>
            <person name="Moule S."/>
            <person name="Norberczak H."/>
            <person name="O'Neil S."/>
            <person name="Ormond D."/>
            <person name="Price C."/>
            <person name="Rabbinowitsch E."/>
            <person name="Rutter S."/>
            <person name="Sanders M."/>
            <person name="Saunders D."/>
            <person name="Seeger K."/>
            <person name="Sharp S."/>
            <person name="Simmonds M."/>
            <person name="Skelton J."/>
            <person name="Squares R."/>
            <person name="Squares S."/>
            <person name="Stevens K."/>
            <person name="Unwin L."/>
            <person name="Whitehead S."/>
            <person name="Barrell B.G."/>
            <person name="Maskell D.J."/>
        </authorList>
    </citation>
    <scope>NUCLEOTIDE SEQUENCE [LARGE SCALE GENOMIC DNA]</scope>
    <source>
        <strain>Tohama I / ATCC BAA-589 / NCTC 13251</strain>
    </source>
</reference>
<comment type="function">
    <text evidence="1">Condenses 4-methyl-5-(beta-hydroxyethyl)thiazole monophosphate (THZ-P) and 2-methyl-4-amino-5-hydroxymethyl pyrimidine pyrophosphate (HMP-PP) to form thiamine monophosphate (TMP).</text>
</comment>
<comment type="catalytic activity">
    <reaction evidence="1">
        <text>2-[(2R,5Z)-2-carboxy-4-methylthiazol-5(2H)-ylidene]ethyl phosphate + 4-amino-2-methyl-5-(diphosphooxymethyl)pyrimidine + 2 H(+) = thiamine phosphate + CO2 + diphosphate</text>
        <dbReference type="Rhea" id="RHEA:47844"/>
        <dbReference type="ChEBI" id="CHEBI:15378"/>
        <dbReference type="ChEBI" id="CHEBI:16526"/>
        <dbReference type="ChEBI" id="CHEBI:33019"/>
        <dbReference type="ChEBI" id="CHEBI:37575"/>
        <dbReference type="ChEBI" id="CHEBI:57841"/>
        <dbReference type="ChEBI" id="CHEBI:62899"/>
        <dbReference type="EC" id="2.5.1.3"/>
    </reaction>
</comment>
<comment type="catalytic activity">
    <reaction evidence="1">
        <text>2-(2-carboxy-4-methylthiazol-5-yl)ethyl phosphate + 4-amino-2-methyl-5-(diphosphooxymethyl)pyrimidine + 2 H(+) = thiamine phosphate + CO2 + diphosphate</text>
        <dbReference type="Rhea" id="RHEA:47848"/>
        <dbReference type="ChEBI" id="CHEBI:15378"/>
        <dbReference type="ChEBI" id="CHEBI:16526"/>
        <dbReference type="ChEBI" id="CHEBI:33019"/>
        <dbReference type="ChEBI" id="CHEBI:37575"/>
        <dbReference type="ChEBI" id="CHEBI:57841"/>
        <dbReference type="ChEBI" id="CHEBI:62890"/>
        <dbReference type="EC" id="2.5.1.3"/>
    </reaction>
</comment>
<comment type="catalytic activity">
    <reaction evidence="1">
        <text>4-methyl-5-(2-phosphooxyethyl)-thiazole + 4-amino-2-methyl-5-(diphosphooxymethyl)pyrimidine + H(+) = thiamine phosphate + diphosphate</text>
        <dbReference type="Rhea" id="RHEA:22328"/>
        <dbReference type="ChEBI" id="CHEBI:15378"/>
        <dbReference type="ChEBI" id="CHEBI:33019"/>
        <dbReference type="ChEBI" id="CHEBI:37575"/>
        <dbReference type="ChEBI" id="CHEBI:57841"/>
        <dbReference type="ChEBI" id="CHEBI:58296"/>
        <dbReference type="EC" id="2.5.1.3"/>
    </reaction>
</comment>
<comment type="cofactor">
    <cofactor evidence="1">
        <name>Mg(2+)</name>
        <dbReference type="ChEBI" id="CHEBI:18420"/>
    </cofactor>
    <text evidence="1">Binds 1 Mg(2+) ion per subunit.</text>
</comment>
<comment type="pathway">
    <text evidence="1">Cofactor biosynthesis; thiamine diphosphate biosynthesis; thiamine phosphate from 4-amino-2-methyl-5-diphosphomethylpyrimidine and 4-methyl-5-(2-phosphoethyl)-thiazole: step 1/1.</text>
</comment>
<comment type="similarity">
    <text evidence="1">Belongs to the thiamine-phosphate synthase family.</text>
</comment>
<accession>Q7W049</accession>